<gene>
    <name evidence="1" type="primary">rgy</name>
    <name type="ordered locus">PAE1108</name>
</gene>
<sequence length="1228" mass="138352">MEVPLVAYLHSCPNCGGPITSDRLASGLPCRECLPDGAKAGSIKQVITALRKRKALQGLAWVEAYLRGYEEFAEFFKRIVGFEMWGAQRLWARRFVRGKSFAIVAPTGSGKTTFILIATLYSAKQGKRALLIFPTSALAHQAYKKLLTFAERGGVSLKALAYHSLLTEREKKEALEALERGDFDVLVTTSAFLPKRFELLSRYKFDFVAADDVDSILRATSKNIDRILRLLGVSDAVLNTALEVINLTKQLRKAEVAGDLKEVERLDQEMAKLRAKLREEVQRLKLGVFVASGALAKARRTVRLLLFREILGFDVGGRAEGLRNVVDLYVEASDNVIEQTLALVKRLGPGGIIYVQDRELGEAIVERAREAGLAVEHFFRPRRGVLESFERGELAALVGLASSRSALVRGIDLPHVIRYVIFVGVPKFKFRVRLEEFSIPAYLTFLYNVRSVLAGDARYKADRLIGQLKRLAPYALSVQEALKKASEGAELSSFDRHAVDVVKSAVEFVNSLLQNEEIRKAIETSSEVKLAYIDGEMYVLVPDVTTYIQGSGRTSRLYAGGLSKGLSVVIVDDPKVFHALKRELSLRFDEAEFKHLGEADLDKILADVDRDRKTIRDIMEGRLVPAARGVDLMRTILMVVESPTKARTIANFFGRPSLIISEGIPIYEVSTGDAVLMVTASLGHIYELPTSLNKIDQRQREVLAKWFGDFKHGNYDGENYAVIVKEYGFVPVYNKIWRCRGAVYVDDIDIPPGCKPLDVLEAIRNIAVEVDTVLLGTDPDSEGEKIAFDLYLGLRPYVQDIRRVEFHEVTRRAILNALANPRGVNFSLVKAQIVRRVEDRWIGFGLSKILQANFKNPNLSAGRVQTPVLGWIVNTYEESLKNRVYNVELQLNDVDIRLQVPRDVLDVLRKKKRVAIKLVARERRQVNPPPPYTTDELLRDAVNKLGLSADYAMRLAQDLFESGLITYHRTDSTRVSTAGIAIAREYIVRKFGEGVFKPRSWGEAEEGAHEAIRPTRPIDVEELRGLVNAGVIQLAIQLTKSHYQLYDIIFRRFMASQMEPSVVEVAKYNVEIDGHVIQLERTVGVAYMGFQTLYQLTPVEPELPTGTLDVVIKRYRVVRRVLSQADVLALMRQRGIGRPSTYAHILQVLAKRYYVYVTGRTKLMIPTKRGREIFRFLKEAFGKLVSEDRTRLIEQYMDAIEVGKARYEEVIAELYDEFRKEVLPHLAS</sequence>
<accession>Q8ZXT5</accession>
<keyword id="KW-0067">ATP-binding</keyword>
<keyword id="KW-0963">Cytoplasm</keyword>
<keyword id="KW-0238">DNA-binding</keyword>
<keyword id="KW-0413">Isomerase</keyword>
<keyword id="KW-0460">Magnesium</keyword>
<keyword id="KW-0479">Metal-binding</keyword>
<keyword id="KW-0547">Nucleotide-binding</keyword>
<keyword id="KW-1185">Reference proteome</keyword>
<keyword id="KW-0799">Topoisomerase</keyword>
<keyword id="KW-0862">Zinc</keyword>
<keyword id="KW-0863">Zinc-finger</keyword>
<name>RGYR_PYRAE</name>
<reference key="1">
    <citation type="journal article" date="2002" name="Proc. Natl. Acad. Sci. U.S.A.">
        <title>Genome sequence of the hyperthermophilic crenarchaeon Pyrobaculum aerophilum.</title>
        <authorList>
            <person name="Fitz-Gibbon S.T."/>
            <person name="Ladner H."/>
            <person name="Kim U.-J."/>
            <person name="Stetter K.O."/>
            <person name="Simon M.I."/>
            <person name="Miller J.H."/>
        </authorList>
    </citation>
    <scope>NUCLEOTIDE SEQUENCE [LARGE SCALE GENOMIC DNA]</scope>
    <source>
        <strain>ATCC 51768 / DSM 7523 / JCM 9630 / CIP 104966 / NBRC 100827 / IM2</strain>
    </source>
</reference>
<proteinExistence type="inferred from homology"/>
<protein>
    <recommendedName>
        <fullName evidence="1">Reverse gyrase</fullName>
        <ecNumber evidence="1">5.6.2.-</ecNumber>
    </recommendedName>
</protein>
<feature type="chain" id="PRO_0000158088" description="Reverse gyrase">
    <location>
        <begin position="1"/>
        <end position="1228"/>
    </location>
</feature>
<feature type="domain" description="Helicase ATP-binding" evidence="1">
    <location>
        <begin position="92"/>
        <end position="255"/>
    </location>
</feature>
<feature type="domain" description="Toprim" evidence="1">
    <location>
        <begin position="635"/>
        <end position="809"/>
    </location>
</feature>
<feature type="domain" description="Topo IA-type catalytic" evidence="3">
    <location>
        <begin position="825"/>
        <end position="1223"/>
    </location>
</feature>
<feature type="zinc finger region" description="RG N-terminal-type" evidence="2">
    <location>
        <begin position="1"/>
        <end position="41"/>
    </location>
</feature>
<feature type="region of interest" description="Topoisomerase I" evidence="1">
    <location>
        <begin position="631"/>
        <end position="1228"/>
    </location>
</feature>
<feature type="short sequence motif" description="DEAD box" evidence="1">
    <location>
        <begin position="211"/>
        <end position="214"/>
    </location>
</feature>
<feature type="active site" description="O-(5'-phospho-DNA)-tyrosine intermediate" evidence="3">
    <location>
        <position position="967"/>
    </location>
</feature>
<feature type="binding site" evidence="1">
    <location>
        <position position="12"/>
    </location>
    <ligand>
        <name>Zn(2+)</name>
        <dbReference type="ChEBI" id="CHEBI:29105"/>
    </ligand>
</feature>
<feature type="binding site" evidence="1">
    <location>
        <position position="15"/>
    </location>
    <ligand>
        <name>Zn(2+)</name>
        <dbReference type="ChEBI" id="CHEBI:29105"/>
    </ligand>
</feature>
<feature type="binding site" evidence="1">
    <location>
        <position position="30"/>
    </location>
    <ligand>
        <name>Zn(2+)</name>
        <dbReference type="ChEBI" id="CHEBI:29105"/>
    </ligand>
</feature>
<feature type="binding site" evidence="1">
    <location>
        <position position="33"/>
    </location>
    <ligand>
        <name>Zn(2+)</name>
        <dbReference type="ChEBI" id="CHEBI:29105"/>
    </ligand>
</feature>
<feature type="binding site" evidence="1">
    <location>
        <position position="88"/>
    </location>
    <ligand>
        <name>ATP</name>
        <dbReference type="ChEBI" id="CHEBI:30616"/>
    </ligand>
</feature>
<feature type="binding site" evidence="1">
    <location>
        <begin position="105"/>
        <end position="112"/>
    </location>
    <ligand>
        <name>ATP</name>
        <dbReference type="ChEBI" id="CHEBI:30616"/>
    </ligand>
</feature>
<feature type="binding site" evidence="1">
    <location>
        <position position="641"/>
    </location>
    <ligand>
        <name>Mg(2+)</name>
        <dbReference type="ChEBI" id="CHEBI:18420"/>
        <note>catalytic</note>
    </ligand>
</feature>
<feature type="binding site" evidence="1">
    <location>
        <position position="778"/>
    </location>
    <ligand>
        <name>Mg(2+)</name>
        <dbReference type="ChEBI" id="CHEBI:18420"/>
        <note>catalytic</note>
    </ligand>
</feature>
<comment type="function">
    <text evidence="1">Modifies the topological state of DNA by introducing positive supercoils in an ATP-dependent process, increasing the linking number in steps of +1. Binds to single-stranded DNA, transiently cleaves and then rejoins the ends, introducing a positive supercoil in the process. The scissile phosphodiester is attacked by the catalytic tyrosine of the enzyme, resulting in the formation of a DNA-(5'-phosphotyrosyl)-enzyme intermediate. Probably involved in rewinding DNA strands in regions of the chromosome that have opened up to allow replication, transcription, DNA repair and/or for DNA protection.</text>
</comment>
<comment type="catalytic activity">
    <reaction evidence="1">
        <text>ATP + H2O = ADP + phosphate + H(+)</text>
        <dbReference type="Rhea" id="RHEA:13065"/>
        <dbReference type="ChEBI" id="CHEBI:15377"/>
        <dbReference type="ChEBI" id="CHEBI:15378"/>
        <dbReference type="ChEBI" id="CHEBI:30616"/>
        <dbReference type="ChEBI" id="CHEBI:43474"/>
        <dbReference type="ChEBI" id="CHEBI:456216"/>
    </reaction>
</comment>
<comment type="cofactor">
    <cofactor evidence="1">
        <name>Zn(2+)</name>
        <dbReference type="ChEBI" id="CHEBI:29105"/>
    </cofactor>
    <text evidence="1">Binds 1 zinc ion per subunit.</text>
</comment>
<comment type="cofactor">
    <cofactor evidence="1">
        <name>Mg(2+)</name>
        <dbReference type="ChEBI" id="CHEBI:18420"/>
    </cofactor>
</comment>
<comment type="subunit">
    <text evidence="1">Monomer.</text>
</comment>
<comment type="subcellular location">
    <subcellularLocation>
        <location evidence="1">Cytoplasm</location>
    </subcellularLocation>
</comment>
<comment type="domain">
    <text evidence="1">Introduction of positive supercoils requires the cooperation of both domains. The helicase-like domain probably does not directly unwind DNA, but more likely acts by driving ATP-dependent conformational changes within the whole enzyme. A beta hairpin in the 'latch' region of the N-terminal domain plays a regulatory role in the enzyme, repressing topoisomerase activity in the absence of ATP and preventing the enzyme from acting as an ATP-independent relaxing enzyme; it also helps to coordinate nucleotide hydrolysis by the ATPase domain with the supercoiling activity of the topoisomerase domain.</text>
</comment>
<comment type="miscellaneous">
    <text evidence="1">This enzyme is the only unique feature of hyperthermophilic bacteria/archaea known and seems to be essential for adaptation to life at high temperatures. It may play a role in stabilization of DNA at high temperatures.</text>
</comment>
<comment type="similarity">
    <text evidence="1">In the N-terminal section; belongs to the DEAD box helicase family. DDVD subfamily.</text>
</comment>
<comment type="similarity">
    <text evidence="1">In the C-terminal section; belongs to the type IA topoisomerase family.</text>
</comment>
<dbReference type="EC" id="5.6.2.-" evidence="1"/>
<dbReference type="EMBL" id="AE009441">
    <property type="protein sequence ID" value="AAL63261.1"/>
    <property type="molecule type" value="Genomic_DNA"/>
</dbReference>
<dbReference type="RefSeq" id="WP_011007733.1">
    <property type="nucleotide sequence ID" value="NC_003364.1"/>
</dbReference>
<dbReference type="SMR" id="Q8ZXT5"/>
<dbReference type="STRING" id="178306.PAE1108"/>
<dbReference type="EnsemblBacteria" id="AAL63261">
    <property type="protein sequence ID" value="AAL63261"/>
    <property type="gene ID" value="PAE1108"/>
</dbReference>
<dbReference type="GeneID" id="1465497"/>
<dbReference type="KEGG" id="pai:PAE1108"/>
<dbReference type="PATRIC" id="fig|178306.9.peg.822"/>
<dbReference type="eggNOG" id="arCOG01526">
    <property type="taxonomic scope" value="Archaea"/>
</dbReference>
<dbReference type="HOGENOM" id="CLU_002886_0_0_2"/>
<dbReference type="InParanoid" id="Q8ZXT5"/>
<dbReference type="Proteomes" id="UP000002439">
    <property type="component" value="Chromosome"/>
</dbReference>
<dbReference type="GO" id="GO:0005737">
    <property type="term" value="C:cytoplasm"/>
    <property type="evidence" value="ECO:0007669"/>
    <property type="project" value="UniProtKB-SubCell"/>
</dbReference>
<dbReference type="GO" id="GO:0005524">
    <property type="term" value="F:ATP binding"/>
    <property type="evidence" value="ECO:0007669"/>
    <property type="project" value="UniProtKB-UniRule"/>
</dbReference>
<dbReference type="GO" id="GO:0016887">
    <property type="term" value="F:ATP hydrolysis activity"/>
    <property type="evidence" value="ECO:0007669"/>
    <property type="project" value="InterPro"/>
</dbReference>
<dbReference type="GO" id="GO:0003677">
    <property type="term" value="F:DNA binding"/>
    <property type="evidence" value="ECO:0007669"/>
    <property type="project" value="UniProtKB-UniRule"/>
</dbReference>
<dbReference type="GO" id="GO:0003918">
    <property type="term" value="F:DNA topoisomerase type II (double strand cut, ATP-hydrolyzing) activity"/>
    <property type="evidence" value="ECO:0007669"/>
    <property type="project" value="UniProtKB-EC"/>
</dbReference>
<dbReference type="GO" id="GO:0160097">
    <property type="term" value="F:reverse gyrase activity"/>
    <property type="evidence" value="ECO:0007669"/>
    <property type="project" value="UniProtKB-UniRule"/>
</dbReference>
<dbReference type="GO" id="GO:0008270">
    <property type="term" value="F:zinc ion binding"/>
    <property type="evidence" value="ECO:0007669"/>
    <property type="project" value="UniProtKB-UniRule"/>
</dbReference>
<dbReference type="GO" id="GO:0006265">
    <property type="term" value="P:DNA topological change"/>
    <property type="evidence" value="ECO:0007669"/>
    <property type="project" value="UniProtKB-UniRule"/>
</dbReference>
<dbReference type="CDD" id="cd17924">
    <property type="entry name" value="DDXDc_reverse_gyrase"/>
    <property type="match status" value="1"/>
</dbReference>
<dbReference type="CDD" id="cd18798">
    <property type="entry name" value="SF2_C_reverse_gyrase"/>
    <property type="match status" value="1"/>
</dbReference>
<dbReference type="CDD" id="cd00186">
    <property type="entry name" value="TOP1Ac"/>
    <property type="match status" value="1"/>
</dbReference>
<dbReference type="CDD" id="cd03361">
    <property type="entry name" value="TOPRIM_TopoIA_RevGyr"/>
    <property type="match status" value="1"/>
</dbReference>
<dbReference type="Gene3D" id="2.60.510.20">
    <property type="match status" value="1"/>
</dbReference>
<dbReference type="Gene3D" id="3.40.50.140">
    <property type="match status" value="1"/>
</dbReference>
<dbReference type="Gene3D" id="3.40.50.300">
    <property type="entry name" value="P-loop containing nucleotide triphosphate hydrolases"/>
    <property type="match status" value="3"/>
</dbReference>
<dbReference type="Gene3D" id="1.10.460.10">
    <property type="entry name" value="Topoisomerase I, domain 2"/>
    <property type="match status" value="1"/>
</dbReference>
<dbReference type="Gene3D" id="1.10.290.10">
    <property type="entry name" value="Topoisomerase I, domain 4"/>
    <property type="match status" value="1"/>
</dbReference>
<dbReference type="HAMAP" id="MF_01125">
    <property type="entry name" value="Reverse_gyrase"/>
    <property type="match status" value="1"/>
</dbReference>
<dbReference type="InterPro" id="IPR003593">
    <property type="entry name" value="AAA+_ATPase"/>
</dbReference>
<dbReference type="InterPro" id="IPR011545">
    <property type="entry name" value="DEAD/DEAH_box_helicase_dom"/>
</dbReference>
<dbReference type="InterPro" id="IPR014001">
    <property type="entry name" value="Helicase_ATP-bd"/>
</dbReference>
<dbReference type="InterPro" id="IPR027417">
    <property type="entry name" value="P-loop_NTPase"/>
</dbReference>
<dbReference type="InterPro" id="IPR005736">
    <property type="entry name" value="Reverse_gyrase"/>
</dbReference>
<dbReference type="InterPro" id="IPR003601">
    <property type="entry name" value="Topo_IA_2"/>
</dbReference>
<dbReference type="InterPro" id="IPR013497">
    <property type="entry name" value="Topo_IA_cen"/>
</dbReference>
<dbReference type="InterPro" id="IPR013824">
    <property type="entry name" value="Topo_IA_cen_sub1"/>
</dbReference>
<dbReference type="InterPro" id="IPR013826">
    <property type="entry name" value="Topo_IA_cen_sub3"/>
</dbReference>
<dbReference type="InterPro" id="IPR023405">
    <property type="entry name" value="Topo_IA_core_domain"/>
</dbReference>
<dbReference type="InterPro" id="IPR003602">
    <property type="entry name" value="Topo_IA_DNA-bd_dom"/>
</dbReference>
<dbReference type="InterPro" id="IPR006171">
    <property type="entry name" value="TOPRIM_dom"/>
</dbReference>
<dbReference type="InterPro" id="IPR034142">
    <property type="entry name" value="TOPRIM_RevGyr"/>
</dbReference>
<dbReference type="InterPro" id="IPR040569">
    <property type="entry name" value="Znf_Rg"/>
</dbReference>
<dbReference type="NCBIfam" id="TIGR01054">
    <property type="entry name" value="rgy"/>
    <property type="match status" value="1"/>
</dbReference>
<dbReference type="PANTHER" id="PTHR43505">
    <property type="entry name" value="REVERSE GYRASE"/>
    <property type="match status" value="1"/>
</dbReference>
<dbReference type="PANTHER" id="PTHR43505:SF1">
    <property type="entry name" value="REVERSE GYRASE"/>
    <property type="match status" value="1"/>
</dbReference>
<dbReference type="Pfam" id="PF00270">
    <property type="entry name" value="DEAD"/>
    <property type="match status" value="1"/>
</dbReference>
<dbReference type="Pfam" id="PF01131">
    <property type="entry name" value="Topoisom_bac"/>
    <property type="match status" value="1"/>
</dbReference>
<dbReference type="Pfam" id="PF01751">
    <property type="entry name" value="Toprim"/>
    <property type="match status" value="1"/>
</dbReference>
<dbReference type="Pfam" id="PF17915">
    <property type="entry name" value="zf_Rg"/>
    <property type="match status" value="1"/>
</dbReference>
<dbReference type="PRINTS" id="PR00417">
    <property type="entry name" value="PRTPISMRASEI"/>
</dbReference>
<dbReference type="SMART" id="SM00382">
    <property type="entry name" value="AAA"/>
    <property type="match status" value="1"/>
</dbReference>
<dbReference type="SMART" id="SM00487">
    <property type="entry name" value="DEXDc"/>
    <property type="match status" value="1"/>
</dbReference>
<dbReference type="SMART" id="SM00437">
    <property type="entry name" value="TOP1Ac"/>
    <property type="match status" value="1"/>
</dbReference>
<dbReference type="SMART" id="SM00436">
    <property type="entry name" value="TOP1Bc"/>
    <property type="match status" value="1"/>
</dbReference>
<dbReference type="SMART" id="SM00493">
    <property type="entry name" value="TOPRIM"/>
    <property type="match status" value="1"/>
</dbReference>
<dbReference type="SUPFAM" id="SSF52540">
    <property type="entry name" value="P-loop containing nucleoside triphosphate hydrolases"/>
    <property type="match status" value="2"/>
</dbReference>
<dbReference type="SUPFAM" id="SSF56712">
    <property type="entry name" value="Prokaryotic type I DNA topoisomerase"/>
    <property type="match status" value="1"/>
</dbReference>
<dbReference type="PROSITE" id="PS51192">
    <property type="entry name" value="HELICASE_ATP_BIND_1"/>
    <property type="match status" value="1"/>
</dbReference>
<dbReference type="PROSITE" id="PS52039">
    <property type="entry name" value="TOPO_IA_2"/>
    <property type="match status" value="1"/>
</dbReference>
<dbReference type="PROSITE" id="PS50880">
    <property type="entry name" value="TOPRIM"/>
    <property type="match status" value="1"/>
</dbReference>
<dbReference type="PROSITE" id="PS52036">
    <property type="entry name" value="ZF_RG_N"/>
    <property type="match status" value="1"/>
</dbReference>
<organism>
    <name type="scientific">Pyrobaculum aerophilum (strain ATCC 51768 / DSM 7523 / JCM 9630 / CIP 104966 / NBRC 100827 / IM2)</name>
    <dbReference type="NCBI Taxonomy" id="178306"/>
    <lineage>
        <taxon>Archaea</taxon>
        <taxon>Thermoproteota</taxon>
        <taxon>Thermoprotei</taxon>
        <taxon>Thermoproteales</taxon>
        <taxon>Thermoproteaceae</taxon>
        <taxon>Pyrobaculum</taxon>
    </lineage>
</organism>
<evidence type="ECO:0000255" key="1">
    <source>
        <dbReference type="HAMAP-Rule" id="MF_01125"/>
    </source>
</evidence>
<evidence type="ECO:0000255" key="2">
    <source>
        <dbReference type="PROSITE-ProRule" id="PRU01380"/>
    </source>
</evidence>
<evidence type="ECO:0000255" key="3">
    <source>
        <dbReference type="PROSITE-ProRule" id="PRU01383"/>
    </source>
</evidence>